<dbReference type="EMBL" id="AF015825">
    <property type="protein sequence ID" value="AAC46309.1"/>
    <property type="molecule type" value="Genomic_DNA"/>
</dbReference>
<dbReference type="EMBL" id="AL009126">
    <property type="protein sequence ID" value="CAB13070.2"/>
    <property type="molecule type" value="Genomic_DNA"/>
</dbReference>
<dbReference type="PIR" id="B69850">
    <property type="entry name" value="B69850"/>
</dbReference>
<dbReference type="RefSeq" id="NP_389095.2">
    <property type="nucleotide sequence ID" value="NC_000964.3"/>
</dbReference>
<dbReference type="RefSeq" id="WP_003244687.1">
    <property type="nucleotide sequence ID" value="NZ_OZ025638.1"/>
</dbReference>
<dbReference type="FunCoup" id="O34458">
    <property type="interactions" value="27"/>
</dbReference>
<dbReference type="STRING" id="224308.BSU12130"/>
<dbReference type="PaxDb" id="224308-BSU12130"/>
<dbReference type="EnsemblBacteria" id="CAB13070">
    <property type="protein sequence ID" value="CAB13070"/>
    <property type="gene ID" value="BSU_12130"/>
</dbReference>
<dbReference type="GeneID" id="939398"/>
<dbReference type="KEGG" id="bsu:BSU12130"/>
<dbReference type="PATRIC" id="fig|224308.179.peg.1311"/>
<dbReference type="eggNOG" id="COG5504">
    <property type="taxonomic scope" value="Bacteria"/>
</dbReference>
<dbReference type="InParanoid" id="O34458"/>
<dbReference type="OrthoDB" id="148961at2"/>
<dbReference type="PhylomeDB" id="O34458"/>
<dbReference type="BioCyc" id="BSUB:BSU12130-MONOMER"/>
<dbReference type="Proteomes" id="UP000001570">
    <property type="component" value="Chromosome"/>
</dbReference>
<dbReference type="InterPro" id="IPR018728">
    <property type="entry name" value="DUF2268"/>
</dbReference>
<dbReference type="Pfam" id="PF10026">
    <property type="entry name" value="DUF2268"/>
    <property type="match status" value="1"/>
</dbReference>
<gene>
    <name type="primary">yjfC</name>
    <name type="ordered locus">BSU12130</name>
</gene>
<proteinExistence type="predicted"/>
<feature type="chain" id="PRO_0000359971" description="Uncharacterized protein YjfC">
    <location>
        <begin position="1"/>
        <end position="299"/>
    </location>
</feature>
<feature type="sequence conflict" description="In Ref. 1; AAC46309." evidence="1" ref="1">
    <original>ST</original>
    <variation>LHEKSVTYSGAF</variation>
    <location>
        <begin position="298"/>
        <end position="299"/>
    </location>
</feature>
<keyword id="KW-1185">Reference proteome</keyword>
<name>YJFC_BACSU</name>
<organism>
    <name type="scientific">Bacillus subtilis (strain 168)</name>
    <dbReference type="NCBI Taxonomy" id="224308"/>
    <lineage>
        <taxon>Bacteria</taxon>
        <taxon>Bacillati</taxon>
        <taxon>Bacillota</taxon>
        <taxon>Bacilli</taxon>
        <taxon>Bacillales</taxon>
        <taxon>Bacillaceae</taxon>
        <taxon>Bacillus</taxon>
    </lineage>
</organism>
<accession>O34458</accession>
<accession>Q796P2</accession>
<sequence>MNLVMEKTFEQYEKLFSMEEQKREDVFRYTMMRPFEKMWTAIQVPLKAKEPNGYDVIMAAKMLGYLDVRDAESGQKALQILKESHVSETAESALRQCIFFAEREQLRVNAKEIKFGLYIADPNKLQLQKGYCGFGGIPGFIHVWINPNSYNLPRIPSIIAHEFHHNVRFSYIDFHHGSVSVGDYLVIEGLAESFARELFGTERLGPWVTRFDHEDLQYSIDVINEVLDVKGFSEVSRYMFGDPIANDQGFKPAGLSAFAGYAVGYHAVQSFMNQHHITISEATRLDAKTIISQCGLFST</sequence>
<protein>
    <recommendedName>
        <fullName>Uncharacterized protein YjfC</fullName>
    </recommendedName>
</protein>
<evidence type="ECO:0000305" key="1"/>
<reference key="1">
    <citation type="journal article" date="1998" name="Microbiology">
        <title>A 35.7 kb DNA fragment from the Bacillus subtilis chromosome containing a putative 12.3 kb operon involved in hexuronate catabolism and a perfectly symmetrical hypothetical catabolite-responsive element.</title>
        <authorList>
            <person name="Rivolta C."/>
            <person name="Soldo B."/>
            <person name="Lazarevic V."/>
            <person name="Joris B."/>
            <person name="Mauel C."/>
            <person name="Karamata D."/>
        </authorList>
    </citation>
    <scope>NUCLEOTIDE SEQUENCE [GENOMIC DNA]</scope>
    <source>
        <strain>168</strain>
    </source>
</reference>
<reference key="2">
    <citation type="journal article" date="1997" name="Nature">
        <title>The complete genome sequence of the Gram-positive bacterium Bacillus subtilis.</title>
        <authorList>
            <person name="Kunst F."/>
            <person name="Ogasawara N."/>
            <person name="Moszer I."/>
            <person name="Albertini A.M."/>
            <person name="Alloni G."/>
            <person name="Azevedo V."/>
            <person name="Bertero M.G."/>
            <person name="Bessieres P."/>
            <person name="Bolotin A."/>
            <person name="Borchert S."/>
            <person name="Borriss R."/>
            <person name="Boursier L."/>
            <person name="Brans A."/>
            <person name="Braun M."/>
            <person name="Brignell S.C."/>
            <person name="Bron S."/>
            <person name="Brouillet S."/>
            <person name="Bruschi C.V."/>
            <person name="Caldwell B."/>
            <person name="Capuano V."/>
            <person name="Carter N.M."/>
            <person name="Choi S.-K."/>
            <person name="Codani J.-J."/>
            <person name="Connerton I.F."/>
            <person name="Cummings N.J."/>
            <person name="Daniel R.A."/>
            <person name="Denizot F."/>
            <person name="Devine K.M."/>
            <person name="Duesterhoeft A."/>
            <person name="Ehrlich S.D."/>
            <person name="Emmerson P.T."/>
            <person name="Entian K.-D."/>
            <person name="Errington J."/>
            <person name="Fabret C."/>
            <person name="Ferrari E."/>
            <person name="Foulger D."/>
            <person name="Fritz C."/>
            <person name="Fujita M."/>
            <person name="Fujita Y."/>
            <person name="Fuma S."/>
            <person name="Galizzi A."/>
            <person name="Galleron N."/>
            <person name="Ghim S.-Y."/>
            <person name="Glaser P."/>
            <person name="Goffeau A."/>
            <person name="Golightly E.J."/>
            <person name="Grandi G."/>
            <person name="Guiseppi G."/>
            <person name="Guy B.J."/>
            <person name="Haga K."/>
            <person name="Haiech J."/>
            <person name="Harwood C.R."/>
            <person name="Henaut A."/>
            <person name="Hilbert H."/>
            <person name="Holsappel S."/>
            <person name="Hosono S."/>
            <person name="Hullo M.-F."/>
            <person name="Itaya M."/>
            <person name="Jones L.-M."/>
            <person name="Joris B."/>
            <person name="Karamata D."/>
            <person name="Kasahara Y."/>
            <person name="Klaerr-Blanchard M."/>
            <person name="Klein C."/>
            <person name="Kobayashi Y."/>
            <person name="Koetter P."/>
            <person name="Koningstein G."/>
            <person name="Krogh S."/>
            <person name="Kumano M."/>
            <person name="Kurita K."/>
            <person name="Lapidus A."/>
            <person name="Lardinois S."/>
            <person name="Lauber J."/>
            <person name="Lazarevic V."/>
            <person name="Lee S.-M."/>
            <person name="Levine A."/>
            <person name="Liu H."/>
            <person name="Masuda S."/>
            <person name="Mauel C."/>
            <person name="Medigue C."/>
            <person name="Medina N."/>
            <person name="Mellado R.P."/>
            <person name="Mizuno M."/>
            <person name="Moestl D."/>
            <person name="Nakai S."/>
            <person name="Noback M."/>
            <person name="Noone D."/>
            <person name="O'Reilly M."/>
            <person name="Ogawa K."/>
            <person name="Ogiwara A."/>
            <person name="Oudega B."/>
            <person name="Park S.-H."/>
            <person name="Parro V."/>
            <person name="Pohl T.M."/>
            <person name="Portetelle D."/>
            <person name="Porwollik S."/>
            <person name="Prescott A.M."/>
            <person name="Presecan E."/>
            <person name="Pujic P."/>
            <person name="Purnelle B."/>
            <person name="Rapoport G."/>
            <person name="Rey M."/>
            <person name="Reynolds S."/>
            <person name="Rieger M."/>
            <person name="Rivolta C."/>
            <person name="Rocha E."/>
            <person name="Roche B."/>
            <person name="Rose M."/>
            <person name="Sadaie Y."/>
            <person name="Sato T."/>
            <person name="Scanlan E."/>
            <person name="Schleich S."/>
            <person name="Schroeter R."/>
            <person name="Scoffone F."/>
            <person name="Sekiguchi J."/>
            <person name="Sekowska A."/>
            <person name="Seror S.J."/>
            <person name="Serror P."/>
            <person name="Shin B.-S."/>
            <person name="Soldo B."/>
            <person name="Sorokin A."/>
            <person name="Tacconi E."/>
            <person name="Takagi T."/>
            <person name="Takahashi H."/>
            <person name="Takemaru K."/>
            <person name="Takeuchi M."/>
            <person name="Tamakoshi A."/>
            <person name="Tanaka T."/>
            <person name="Terpstra P."/>
            <person name="Tognoni A."/>
            <person name="Tosato V."/>
            <person name="Uchiyama S."/>
            <person name="Vandenbol M."/>
            <person name="Vannier F."/>
            <person name="Vassarotti A."/>
            <person name="Viari A."/>
            <person name="Wambutt R."/>
            <person name="Wedler E."/>
            <person name="Wedler H."/>
            <person name="Weitzenegger T."/>
            <person name="Winters P."/>
            <person name="Wipat A."/>
            <person name="Yamamoto H."/>
            <person name="Yamane K."/>
            <person name="Yasumoto K."/>
            <person name="Yata K."/>
            <person name="Yoshida K."/>
            <person name="Yoshikawa H.-F."/>
            <person name="Zumstein E."/>
            <person name="Yoshikawa H."/>
            <person name="Danchin A."/>
        </authorList>
    </citation>
    <scope>NUCLEOTIDE SEQUENCE [LARGE SCALE GENOMIC DNA]</scope>
    <source>
        <strain>168</strain>
    </source>
</reference>
<reference key="3">
    <citation type="journal article" date="2009" name="Microbiology">
        <title>From a consortium sequence to a unified sequence: the Bacillus subtilis 168 reference genome a decade later.</title>
        <authorList>
            <person name="Barbe V."/>
            <person name="Cruveiller S."/>
            <person name="Kunst F."/>
            <person name="Lenoble P."/>
            <person name="Meurice G."/>
            <person name="Sekowska A."/>
            <person name="Vallenet D."/>
            <person name="Wang T."/>
            <person name="Moszer I."/>
            <person name="Medigue C."/>
            <person name="Danchin A."/>
        </authorList>
    </citation>
    <scope>SEQUENCE REVISION TO C-TERMINUS</scope>
</reference>